<dbReference type="EMBL" id="CP001025">
    <property type="protein sequence ID" value="ACB63105.1"/>
    <property type="molecule type" value="Genomic_DNA"/>
</dbReference>
<dbReference type="RefSeq" id="WP_006751895.1">
    <property type="nucleotide sequence ID" value="NC_010551.1"/>
</dbReference>
<dbReference type="SMR" id="B1YTE0"/>
<dbReference type="KEGG" id="bac:BamMC406_0608"/>
<dbReference type="HOGENOM" id="CLU_087936_0_0_4"/>
<dbReference type="OrthoDB" id="5293449at2"/>
<dbReference type="Proteomes" id="UP000001680">
    <property type="component" value="Chromosome 1"/>
</dbReference>
<dbReference type="GO" id="GO:0005737">
    <property type="term" value="C:cytoplasm"/>
    <property type="evidence" value="ECO:0007669"/>
    <property type="project" value="UniProtKB-SubCell"/>
</dbReference>
<dbReference type="GO" id="GO:0009379">
    <property type="term" value="C:Holliday junction helicase complex"/>
    <property type="evidence" value="ECO:0007669"/>
    <property type="project" value="InterPro"/>
</dbReference>
<dbReference type="GO" id="GO:0048476">
    <property type="term" value="C:Holliday junction resolvase complex"/>
    <property type="evidence" value="ECO:0007669"/>
    <property type="project" value="UniProtKB-UniRule"/>
</dbReference>
<dbReference type="GO" id="GO:0005524">
    <property type="term" value="F:ATP binding"/>
    <property type="evidence" value="ECO:0007669"/>
    <property type="project" value="InterPro"/>
</dbReference>
<dbReference type="GO" id="GO:0000400">
    <property type="term" value="F:four-way junction DNA binding"/>
    <property type="evidence" value="ECO:0007669"/>
    <property type="project" value="UniProtKB-UniRule"/>
</dbReference>
<dbReference type="GO" id="GO:0009378">
    <property type="term" value="F:four-way junction helicase activity"/>
    <property type="evidence" value="ECO:0007669"/>
    <property type="project" value="InterPro"/>
</dbReference>
<dbReference type="GO" id="GO:0006310">
    <property type="term" value="P:DNA recombination"/>
    <property type="evidence" value="ECO:0007669"/>
    <property type="project" value="UniProtKB-UniRule"/>
</dbReference>
<dbReference type="GO" id="GO:0006281">
    <property type="term" value="P:DNA repair"/>
    <property type="evidence" value="ECO:0007669"/>
    <property type="project" value="UniProtKB-UniRule"/>
</dbReference>
<dbReference type="CDD" id="cd14332">
    <property type="entry name" value="UBA_RuvA_C"/>
    <property type="match status" value="1"/>
</dbReference>
<dbReference type="Gene3D" id="1.10.150.20">
    <property type="entry name" value="5' to 3' exonuclease, C-terminal subdomain"/>
    <property type="match status" value="1"/>
</dbReference>
<dbReference type="Gene3D" id="1.10.8.10">
    <property type="entry name" value="DNA helicase RuvA subunit, C-terminal domain"/>
    <property type="match status" value="1"/>
</dbReference>
<dbReference type="Gene3D" id="2.40.50.140">
    <property type="entry name" value="Nucleic acid-binding proteins"/>
    <property type="match status" value="1"/>
</dbReference>
<dbReference type="HAMAP" id="MF_00031">
    <property type="entry name" value="DNA_HJ_migration_RuvA"/>
    <property type="match status" value="1"/>
</dbReference>
<dbReference type="InterPro" id="IPR013849">
    <property type="entry name" value="DNA_helicase_Holl-junc_RuvA_I"/>
</dbReference>
<dbReference type="InterPro" id="IPR003583">
    <property type="entry name" value="Hlx-hairpin-Hlx_DNA-bd_motif"/>
</dbReference>
<dbReference type="InterPro" id="IPR012340">
    <property type="entry name" value="NA-bd_OB-fold"/>
</dbReference>
<dbReference type="InterPro" id="IPR000085">
    <property type="entry name" value="RuvA"/>
</dbReference>
<dbReference type="InterPro" id="IPR010994">
    <property type="entry name" value="RuvA_2-like"/>
</dbReference>
<dbReference type="InterPro" id="IPR011114">
    <property type="entry name" value="RuvA_C"/>
</dbReference>
<dbReference type="InterPro" id="IPR036267">
    <property type="entry name" value="RuvA_C_sf"/>
</dbReference>
<dbReference type="NCBIfam" id="TIGR00084">
    <property type="entry name" value="ruvA"/>
    <property type="match status" value="1"/>
</dbReference>
<dbReference type="Pfam" id="PF14520">
    <property type="entry name" value="HHH_5"/>
    <property type="match status" value="1"/>
</dbReference>
<dbReference type="Pfam" id="PF07499">
    <property type="entry name" value="RuvA_C"/>
    <property type="match status" value="1"/>
</dbReference>
<dbReference type="Pfam" id="PF01330">
    <property type="entry name" value="RuvA_N"/>
    <property type="match status" value="1"/>
</dbReference>
<dbReference type="SMART" id="SM00278">
    <property type="entry name" value="HhH1"/>
    <property type="match status" value="2"/>
</dbReference>
<dbReference type="SUPFAM" id="SSF46929">
    <property type="entry name" value="DNA helicase RuvA subunit, C-terminal domain"/>
    <property type="match status" value="1"/>
</dbReference>
<dbReference type="SUPFAM" id="SSF50249">
    <property type="entry name" value="Nucleic acid-binding proteins"/>
    <property type="match status" value="1"/>
</dbReference>
<dbReference type="SUPFAM" id="SSF47781">
    <property type="entry name" value="RuvA domain 2-like"/>
    <property type="match status" value="1"/>
</dbReference>
<comment type="function">
    <text evidence="1">The RuvA-RuvB-RuvC complex processes Holliday junction (HJ) DNA during genetic recombination and DNA repair, while the RuvA-RuvB complex plays an important role in the rescue of blocked DNA replication forks via replication fork reversal (RFR). RuvA specifically binds to HJ cruciform DNA, conferring on it an open structure. The RuvB hexamer acts as an ATP-dependent pump, pulling dsDNA into and through the RuvAB complex. HJ branch migration allows RuvC to scan DNA until it finds its consensus sequence, where it cleaves and resolves the cruciform DNA.</text>
</comment>
<comment type="subunit">
    <text evidence="1">Homotetramer. Forms an RuvA(8)-RuvB(12)-Holliday junction (HJ) complex. HJ DNA is sandwiched between 2 RuvA tetramers; dsDNA enters through RuvA and exits via RuvB. An RuvB hexamer assembles on each DNA strand where it exits the tetramer. Each RuvB hexamer is contacted by two RuvA subunits (via domain III) on 2 adjacent RuvB subunits; this complex drives branch migration. In the full resolvosome a probable DNA-RuvA(4)-RuvB(12)-RuvC(2) complex forms which resolves the HJ.</text>
</comment>
<comment type="subcellular location">
    <subcellularLocation>
        <location evidence="1">Cytoplasm</location>
    </subcellularLocation>
</comment>
<comment type="domain">
    <text evidence="1">Has three domains with a flexible linker between the domains II and III and assumes an 'L' shape. Domain III is highly mobile and contacts RuvB.</text>
</comment>
<comment type="similarity">
    <text evidence="1">Belongs to the RuvA family.</text>
</comment>
<evidence type="ECO:0000255" key="1">
    <source>
        <dbReference type="HAMAP-Rule" id="MF_00031"/>
    </source>
</evidence>
<sequence length="193" mass="20456">MIGRIAGILLEKNPPHLLVDCNGVGYEIDVPMSTFYNLPQTGERVVLLTQQIVREDAHLLYGFLTPQERTTFRELLKITGIGARMALAVLSGMSVQELAQAVTMQDAARLTRLPGIGKKTAERLLLELKGKLGADLGALAGAASQSDHATDILNALVALGYSEKEGLAAIKNVPAGTGVSEGIKLALKALSKV</sequence>
<gene>
    <name evidence="1" type="primary">ruvA</name>
    <name type="ordered locus">BamMC406_0608</name>
</gene>
<name>RUVA_BURA4</name>
<feature type="chain" id="PRO_1000090289" description="Holliday junction branch migration complex subunit RuvA">
    <location>
        <begin position="1"/>
        <end position="193"/>
    </location>
</feature>
<feature type="region of interest" description="Domain I" evidence="1">
    <location>
        <begin position="1"/>
        <end position="64"/>
    </location>
</feature>
<feature type="region of interest" description="Domain II" evidence="1">
    <location>
        <begin position="65"/>
        <end position="139"/>
    </location>
</feature>
<feature type="region of interest" description="Flexible linker" evidence="1">
    <location>
        <begin position="139"/>
        <end position="143"/>
    </location>
</feature>
<feature type="region of interest" description="Domain III" evidence="1">
    <location>
        <begin position="144"/>
        <end position="193"/>
    </location>
</feature>
<organism>
    <name type="scientific">Burkholderia ambifaria (strain MC40-6)</name>
    <dbReference type="NCBI Taxonomy" id="398577"/>
    <lineage>
        <taxon>Bacteria</taxon>
        <taxon>Pseudomonadati</taxon>
        <taxon>Pseudomonadota</taxon>
        <taxon>Betaproteobacteria</taxon>
        <taxon>Burkholderiales</taxon>
        <taxon>Burkholderiaceae</taxon>
        <taxon>Burkholderia</taxon>
        <taxon>Burkholderia cepacia complex</taxon>
    </lineage>
</organism>
<accession>B1YTE0</accession>
<protein>
    <recommendedName>
        <fullName evidence="1">Holliday junction branch migration complex subunit RuvA</fullName>
    </recommendedName>
</protein>
<reference key="1">
    <citation type="submission" date="2008-04" db="EMBL/GenBank/DDBJ databases">
        <title>Complete sequence of chromosome 1 of Burkholderia ambifaria MC40-6.</title>
        <authorList>
            <person name="Copeland A."/>
            <person name="Lucas S."/>
            <person name="Lapidus A."/>
            <person name="Glavina del Rio T."/>
            <person name="Dalin E."/>
            <person name="Tice H."/>
            <person name="Pitluck S."/>
            <person name="Chain P."/>
            <person name="Malfatti S."/>
            <person name="Shin M."/>
            <person name="Vergez L."/>
            <person name="Lang D."/>
            <person name="Schmutz J."/>
            <person name="Larimer F."/>
            <person name="Land M."/>
            <person name="Hauser L."/>
            <person name="Kyrpides N."/>
            <person name="Lykidis A."/>
            <person name="Ramette A."/>
            <person name="Konstantinidis K."/>
            <person name="Tiedje J."/>
            <person name="Richardson P."/>
        </authorList>
    </citation>
    <scope>NUCLEOTIDE SEQUENCE [LARGE SCALE GENOMIC DNA]</scope>
    <source>
        <strain>MC40-6</strain>
    </source>
</reference>
<keyword id="KW-0963">Cytoplasm</keyword>
<keyword id="KW-0227">DNA damage</keyword>
<keyword id="KW-0233">DNA recombination</keyword>
<keyword id="KW-0234">DNA repair</keyword>
<keyword id="KW-0238">DNA-binding</keyword>
<proteinExistence type="inferred from homology"/>